<name>AROC_SALEP</name>
<sequence>MAGNTIGQLFRVTTFGESHGLALGCIVDGVPPGIPLTEADLQHDLDRRRPGTSRYTTQRREPDQVKILSGVFDGVTTGTSIGLLIENTDQRSQDYSAIKDVFRPGHADYTYEQKYGLRDYRGGGRSSARETAMRVAAGAIAKKYLAEKFGIEIRGCLTQMGDIPLEIKDWRQVELNPFFCPDADKLDALDELMRALKKEGDSIGAKVTVMASGVPAGLGEPVFDRLDADIAHALMSINAVKGVEIGEGFNVVALRGSQNRDEITAQGFQSNHAGGILGGISSGQHIVAHMALKPTSSITVPGRTINRMGEEVEMITKGRHDPCVGIRAVPIAEAMLAIVLMDHLLRHRAQNADVKTEIPRW</sequence>
<organism>
    <name type="scientific">Salmonella enteritidis PT4 (strain P125109)</name>
    <dbReference type="NCBI Taxonomy" id="550537"/>
    <lineage>
        <taxon>Bacteria</taxon>
        <taxon>Pseudomonadati</taxon>
        <taxon>Pseudomonadota</taxon>
        <taxon>Gammaproteobacteria</taxon>
        <taxon>Enterobacterales</taxon>
        <taxon>Enterobacteriaceae</taxon>
        <taxon>Salmonella</taxon>
    </lineage>
</organism>
<proteinExistence type="inferred from homology"/>
<gene>
    <name evidence="1" type="primary">aroC</name>
    <name type="ordered locus">SEN2366</name>
</gene>
<protein>
    <recommendedName>
        <fullName evidence="1">Chorismate synthase</fullName>
        <shortName evidence="1">CS</shortName>
        <ecNumber evidence="1">4.2.3.5</ecNumber>
    </recommendedName>
    <alternativeName>
        <fullName evidence="1">5-enolpyruvylshikimate-3-phosphate phospholyase</fullName>
    </alternativeName>
</protein>
<dbReference type="EC" id="4.2.3.5" evidence="1"/>
<dbReference type="EMBL" id="AM933172">
    <property type="protein sequence ID" value="CAR33950.1"/>
    <property type="molecule type" value="Genomic_DNA"/>
</dbReference>
<dbReference type="RefSeq" id="WP_000918457.1">
    <property type="nucleotide sequence ID" value="NC_011294.1"/>
</dbReference>
<dbReference type="SMR" id="B5R3R5"/>
<dbReference type="KEGG" id="set:SEN2366"/>
<dbReference type="HOGENOM" id="CLU_034547_0_2_6"/>
<dbReference type="UniPathway" id="UPA00053">
    <property type="reaction ID" value="UER00090"/>
</dbReference>
<dbReference type="Proteomes" id="UP000000613">
    <property type="component" value="Chromosome"/>
</dbReference>
<dbReference type="GO" id="GO:0005829">
    <property type="term" value="C:cytosol"/>
    <property type="evidence" value="ECO:0007669"/>
    <property type="project" value="TreeGrafter"/>
</dbReference>
<dbReference type="GO" id="GO:0004107">
    <property type="term" value="F:chorismate synthase activity"/>
    <property type="evidence" value="ECO:0007669"/>
    <property type="project" value="UniProtKB-UniRule"/>
</dbReference>
<dbReference type="GO" id="GO:0010181">
    <property type="term" value="F:FMN binding"/>
    <property type="evidence" value="ECO:0007669"/>
    <property type="project" value="TreeGrafter"/>
</dbReference>
<dbReference type="GO" id="GO:0008652">
    <property type="term" value="P:amino acid biosynthetic process"/>
    <property type="evidence" value="ECO:0007669"/>
    <property type="project" value="UniProtKB-KW"/>
</dbReference>
<dbReference type="GO" id="GO:0009073">
    <property type="term" value="P:aromatic amino acid family biosynthetic process"/>
    <property type="evidence" value="ECO:0007669"/>
    <property type="project" value="UniProtKB-KW"/>
</dbReference>
<dbReference type="GO" id="GO:0009423">
    <property type="term" value="P:chorismate biosynthetic process"/>
    <property type="evidence" value="ECO:0007669"/>
    <property type="project" value="UniProtKB-UniRule"/>
</dbReference>
<dbReference type="CDD" id="cd07304">
    <property type="entry name" value="Chorismate_synthase"/>
    <property type="match status" value="1"/>
</dbReference>
<dbReference type="FunFam" id="3.60.150.10:FF:000001">
    <property type="entry name" value="Chorismate synthase"/>
    <property type="match status" value="1"/>
</dbReference>
<dbReference type="Gene3D" id="3.60.150.10">
    <property type="entry name" value="Chorismate synthase AroC"/>
    <property type="match status" value="1"/>
</dbReference>
<dbReference type="HAMAP" id="MF_00300">
    <property type="entry name" value="Chorismate_synth"/>
    <property type="match status" value="1"/>
</dbReference>
<dbReference type="InterPro" id="IPR000453">
    <property type="entry name" value="Chorismate_synth"/>
</dbReference>
<dbReference type="InterPro" id="IPR035904">
    <property type="entry name" value="Chorismate_synth_AroC_sf"/>
</dbReference>
<dbReference type="InterPro" id="IPR020541">
    <property type="entry name" value="Chorismate_synthase_CS"/>
</dbReference>
<dbReference type="NCBIfam" id="TIGR00033">
    <property type="entry name" value="aroC"/>
    <property type="match status" value="1"/>
</dbReference>
<dbReference type="NCBIfam" id="NF003793">
    <property type="entry name" value="PRK05382.1"/>
    <property type="match status" value="1"/>
</dbReference>
<dbReference type="PANTHER" id="PTHR21085">
    <property type="entry name" value="CHORISMATE SYNTHASE"/>
    <property type="match status" value="1"/>
</dbReference>
<dbReference type="PANTHER" id="PTHR21085:SF0">
    <property type="entry name" value="CHORISMATE SYNTHASE"/>
    <property type="match status" value="1"/>
</dbReference>
<dbReference type="Pfam" id="PF01264">
    <property type="entry name" value="Chorismate_synt"/>
    <property type="match status" value="1"/>
</dbReference>
<dbReference type="PIRSF" id="PIRSF001456">
    <property type="entry name" value="Chorismate_synth"/>
    <property type="match status" value="1"/>
</dbReference>
<dbReference type="SUPFAM" id="SSF103263">
    <property type="entry name" value="Chorismate synthase, AroC"/>
    <property type="match status" value="1"/>
</dbReference>
<dbReference type="PROSITE" id="PS00787">
    <property type="entry name" value="CHORISMATE_SYNTHASE_1"/>
    <property type="match status" value="1"/>
</dbReference>
<dbReference type="PROSITE" id="PS00788">
    <property type="entry name" value="CHORISMATE_SYNTHASE_2"/>
    <property type="match status" value="1"/>
</dbReference>
<dbReference type="PROSITE" id="PS00789">
    <property type="entry name" value="CHORISMATE_SYNTHASE_3"/>
    <property type="match status" value="1"/>
</dbReference>
<accession>B5R3R5</accession>
<feature type="chain" id="PRO_1000115393" description="Chorismate synthase">
    <location>
        <begin position="1"/>
        <end position="361"/>
    </location>
</feature>
<feature type="binding site" evidence="1">
    <location>
        <position position="48"/>
    </location>
    <ligand>
        <name>NADP(+)</name>
        <dbReference type="ChEBI" id="CHEBI:58349"/>
    </ligand>
</feature>
<feature type="binding site" evidence="1">
    <location>
        <position position="54"/>
    </location>
    <ligand>
        <name>NADP(+)</name>
        <dbReference type="ChEBI" id="CHEBI:58349"/>
    </ligand>
</feature>
<feature type="binding site" evidence="1">
    <location>
        <begin position="125"/>
        <end position="127"/>
    </location>
    <ligand>
        <name>FMN</name>
        <dbReference type="ChEBI" id="CHEBI:58210"/>
    </ligand>
</feature>
<feature type="binding site" evidence="1">
    <location>
        <begin position="238"/>
        <end position="239"/>
    </location>
    <ligand>
        <name>FMN</name>
        <dbReference type="ChEBI" id="CHEBI:58210"/>
    </ligand>
</feature>
<feature type="binding site" evidence="1">
    <location>
        <position position="278"/>
    </location>
    <ligand>
        <name>FMN</name>
        <dbReference type="ChEBI" id="CHEBI:58210"/>
    </ligand>
</feature>
<feature type="binding site" evidence="1">
    <location>
        <begin position="293"/>
        <end position="297"/>
    </location>
    <ligand>
        <name>FMN</name>
        <dbReference type="ChEBI" id="CHEBI:58210"/>
    </ligand>
</feature>
<feature type="binding site" evidence="1">
    <location>
        <position position="319"/>
    </location>
    <ligand>
        <name>FMN</name>
        <dbReference type="ChEBI" id="CHEBI:58210"/>
    </ligand>
</feature>
<keyword id="KW-0028">Amino-acid biosynthesis</keyword>
<keyword id="KW-0057">Aromatic amino acid biosynthesis</keyword>
<keyword id="KW-0274">FAD</keyword>
<keyword id="KW-0285">Flavoprotein</keyword>
<keyword id="KW-0288">FMN</keyword>
<keyword id="KW-0456">Lyase</keyword>
<keyword id="KW-0521">NADP</keyword>
<reference key="1">
    <citation type="journal article" date="2008" name="Genome Res.">
        <title>Comparative genome analysis of Salmonella enteritidis PT4 and Salmonella gallinarum 287/91 provides insights into evolutionary and host adaptation pathways.</title>
        <authorList>
            <person name="Thomson N.R."/>
            <person name="Clayton D.J."/>
            <person name="Windhorst D."/>
            <person name="Vernikos G."/>
            <person name="Davidson S."/>
            <person name="Churcher C."/>
            <person name="Quail M.A."/>
            <person name="Stevens M."/>
            <person name="Jones M.A."/>
            <person name="Watson M."/>
            <person name="Barron A."/>
            <person name="Layton A."/>
            <person name="Pickard D."/>
            <person name="Kingsley R.A."/>
            <person name="Bignell A."/>
            <person name="Clark L."/>
            <person name="Harris B."/>
            <person name="Ormond D."/>
            <person name="Abdellah Z."/>
            <person name="Brooks K."/>
            <person name="Cherevach I."/>
            <person name="Chillingworth T."/>
            <person name="Woodward J."/>
            <person name="Norberczak H."/>
            <person name="Lord A."/>
            <person name="Arrowsmith C."/>
            <person name="Jagels K."/>
            <person name="Moule S."/>
            <person name="Mungall K."/>
            <person name="Saunders M."/>
            <person name="Whitehead S."/>
            <person name="Chabalgoity J.A."/>
            <person name="Maskell D."/>
            <person name="Humphreys T."/>
            <person name="Roberts M."/>
            <person name="Barrow P.A."/>
            <person name="Dougan G."/>
            <person name="Parkhill J."/>
        </authorList>
    </citation>
    <scope>NUCLEOTIDE SEQUENCE [LARGE SCALE GENOMIC DNA]</scope>
    <source>
        <strain>P125109</strain>
    </source>
</reference>
<evidence type="ECO:0000255" key="1">
    <source>
        <dbReference type="HAMAP-Rule" id="MF_00300"/>
    </source>
</evidence>
<comment type="function">
    <text evidence="1">Catalyzes the anti-1,4-elimination of the C-3 phosphate and the C-6 proR hydrogen from 5-enolpyruvylshikimate-3-phosphate (EPSP) to yield chorismate, which is the branch point compound that serves as the starting substrate for the three terminal pathways of aromatic amino acid biosynthesis. This reaction introduces a second double bond into the aromatic ring system.</text>
</comment>
<comment type="catalytic activity">
    <reaction evidence="1">
        <text>5-O-(1-carboxyvinyl)-3-phosphoshikimate = chorismate + phosphate</text>
        <dbReference type="Rhea" id="RHEA:21020"/>
        <dbReference type="ChEBI" id="CHEBI:29748"/>
        <dbReference type="ChEBI" id="CHEBI:43474"/>
        <dbReference type="ChEBI" id="CHEBI:57701"/>
        <dbReference type="EC" id="4.2.3.5"/>
    </reaction>
</comment>
<comment type="cofactor">
    <cofactor evidence="1">
        <name>FMNH2</name>
        <dbReference type="ChEBI" id="CHEBI:57618"/>
    </cofactor>
    <text evidence="1">Reduced FMN (FMNH(2)).</text>
</comment>
<comment type="pathway">
    <text evidence="1">Metabolic intermediate biosynthesis; chorismate biosynthesis; chorismate from D-erythrose 4-phosphate and phosphoenolpyruvate: step 7/7.</text>
</comment>
<comment type="subunit">
    <text evidence="1">Homotetramer.</text>
</comment>
<comment type="similarity">
    <text evidence="1">Belongs to the chorismate synthase family.</text>
</comment>